<feature type="signal peptide" evidence="2">
    <location>
        <begin position="1"/>
        <end position="23"/>
    </location>
</feature>
<feature type="chain" id="PRO_0000031803" description="Peptide transport periplasmic protein SapA">
    <location>
        <begin position="24"/>
        <end position="565"/>
    </location>
</feature>
<gene>
    <name type="primary">sapA</name>
    <name type="ordered locus">HI_1638</name>
</gene>
<dbReference type="EMBL" id="L42023">
    <property type="protein sequence ID" value="AAC23285.1"/>
    <property type="molecule type" value="Genomic_DNA"/>
</dbReference>
<dbReference type="PIR" id="A64134">
    <property type="entry name" value="A64134"/>
</dbReference>
<dbReference type="RefSeq" id="NP_439780.1">
    <property type="nucleotide sequence ID" value="NC_000907.1"/>
</dbReference>
<dbReference type="SMR" id="P45285"/>
<dbReference type="STRING" id="71421.HI_1638"/>
<dbReference type="EnsemblBacteria" id="AAC23285">
    <property type="protein sequence ID" value="AAC23285"/>
    <property type="gene ID" value="HI_1638"/>
</dbReference>
<dbReference type="KEGG" id="hin:HI_1638"/>
<dbReference type="PATRIC" id="fig|71421.8.peg.1714"/>
<dbReference type="eggNOG" id="COG4166">
    <property type="taxonomic scope" value="Bacteria"/>
</dbReference>
<dbReference type="HOGENOM" id="CLU_017028_7_0_6"/>
<dbReference type="OrthoDB" id="9801912at2"/>
<dbReference type="PhylomeDB" id="P45285"/>
<dbReference type="BioCyc" id="HINF71421:G1GJ1-1655-MONOMER"/>
<dbReference type="Proteomes" id="UP000000579">
    <property type="component" value="Chromosome"/>
</dbReference>
<dbReference type="GO" id="GO:0043190">
    <property type="term" value="C:ATP-binding cassette (ABC) transporter complex"/>
    <property type="evidence" value="ECO:0007669"/>
    <property type="project" value="InterPro"/>
</dbReference>
<dbReference type="GO" id="GO:0030288">
    <property type="term" value="C:outer membrane-bounded periplasmic space"/>
    <property type="evidence" value="ECO:0007669"/>
    <property type="project" value="UniProtKB-ARBA"/>
</dbReference>
<dbReference type="GO" id="GO:1904680">
    <property type="term" value="F:peptide transmembrane transporter activity"/>
    <property type="evidence" value="ECO:0000318"/>
    <property type="project" value="GO_Central"/>
</dbReference>
<dbReference type="GO" id="GO:0015833">
    <property type="term" value="P:peptide transport"/>
    <property type="evidence" value="ECO:0000318"/>
    <property type="project" value="GO_Central"/>
</dbReference>
<dbReference type="GO" id="GO:0015031">
    <property type="term" value="P:protein transport"/>
    <property type="evidence" value="ECO:0007669"/>
    <property type="project" value="UniProtKB-KW"/>
</dbReference>
<dbReference type="CDD" id="cd08493">
    <property type="entry name" value="PBP2_DppA_like"/>
    <property type="match status" value="1"/>
</dbReference>
<dbReference type="Gene3D" id="3.90.76.10">
    <property type="entry name" value="Dipeptide-binding Protein, Domain 1"/>
    <property type="match status" value="1"/>
</dbReference>
<dbReference type="Gene3D" id="3.10.105.10">
    <property type="entry name" value="Dipeptide-binding Protein, Domain 3"/>
    <property type="match status" value="1"/>
</dbReference>
<dbReference type="Gene3D" id="3.40.190.10">
    <property type="entry name" value="Periplasmic binding protein-like II"/>
    <property type="match status" value="1"/>
</dbReference>
<dbReference type="InterPro" id="IPR030678">
    <property type="entry name" value="Peptide/Ni-bd"/>
</dbReference>
<dbReference type="InterPro" id="IPR039424">
    <property type="entry name" value="SBP_5"/>
</dbReference>
<dbReference type="InterPro" id="IPR023765">
    <property type="entry name" value="SBP_5_CS"/>
</dbReference>
<dbReference type="InterPro" id="IPR000914">
    <property type="entry name" value="SBP_5_dom"/>
</dbReference>
<dbReference type="PANTHER" id="PTHR30290:SF28">
    <property type="entry name" value="ABC TRANSPORTER PERIPLASMIC-BINDING PROTEIN SAPA-RELATED"/>
    <property type="match status" value="1"/>
</dbReference>
<dbReference type="PANTHER" id="PTHR30290">
    <property type="entry name" value="PERIPLASMIC BINDING COMPONENT OF ABC TRANSPORTER"/>
    <property type="match status" value="1"/>
</dbReference>
<dbReference type="Pfam" id="PF00496">
    <property type="entry name" value="SBP_bac_5"/>
    <property type="match status" value="1"/>
</dbReference>
<dbReference type="PIRSF" id="PIRSF002741">
    <property type="entry name" value="MppA"/>
    <property type="match status" value="1"/>
</dbReference>
<dbReference type="SUPFAM" id="SSF53850">
    <property type="entry name" value="Periplasmic binding protein-like II"/>
    <property type="match status" value="1"/>
</dbReference>
<dbReference type="PROSITE" id="PS01040">
    <property type="entry name" value="SBP_BACTERIAL_5"/>
    <property type="match status" value="1"/>
</dbReference>
<name>SAPA_HAEIN</name>
<accession>P45285</accession>
<proteinExistence type="inferred from homology"/>
<keyword id="KW-0571">Peptide transport</keyword>
<keyword id="KW-0574">Periplasm</keyword>
<keyword id="KW-0653">Protein transport</keyword>
<keyword id="KW-1185">Reference proteome</keyword>
<keyword id="KW-0732">Signal</keyword>
<keyword id="KW-0813">Transport</keyword>
<reference key="1">
    <citation type="journal article" date="1995" name="Science">
        <title>Whole-genome random sequencing and assembly of Haemophilus influenzae Rd.</title>
        <authorList>
            <person name="Fleischmann R.D."/>
            <person name="Adams M.D."/>
            <person name="White O."/>
            <person name="Clayton R.A."/>
            <person name="Kirkness E.F."/>
            <person name="Kerlavage A.R."/>
            <person name="Bult C.J."/>
            <person name="Tomb J.-F."/>
            <person name="Dougherty B.A."/>
            <person name="Merrick J.M."/>
            <person name="McKenney K."/>
            <person name="Sutton G.G."/>
            <person name="FitzHugh W."/>
            <person name="Fields C.A."/>
            <person name="Gocayne J.D."/>
            <person name="Scott J.D."/>
            <person name="Shirley R."/>
            <person name="Liu L.-I."/>
            <person name="Glodek A."/>
            <person name="Kelley J.M."/>
            <person name="Weidman J.F."/>
            <person name="Phillips C.A."/>
            <person name="Spriggs T."/>
            <person name="Hedblom E."/>
            <person name="Cotton M.D."/>
            <person name="Utterback T.R."/>
            <person name="Hanna M.C."/>
            <person name="Nguyen D.T."/>
            <person name="Saudek D.M."/>
            <person name="Brandon R.C."/>
            <person name="Fine L.D."/>
            <person name="Fritchman J.L."/>
            <person name="Fuhrmann J.L."/>
            <person name="Geoghagen N.S.M."/>
            <person name="Gnehm C.L."/>
            <person name="McDonald L.A."/>
            <person name="Small K.V."/>
            <person name="Fraser C.M."/>
            <person name="Smith H.O."/>
            <person name="Venter J.C."/>
        </authorList>
    </citation>
    <scope>NUCLEOTIDE SEQUENCE [LARGE SCALE GENOMIC DNA]</scope>
    <source>
        <strain>ATCC 51907 / DSM 11121 / KW20 / Rd</strain>
    </source>
</reference>
<sequence>MLRLNLRFLSFLLCIIQSVELQAAPSVPTFLTENGLTYCTHASGFSFNPQTADAGTSMNVVTEQIYNKLFDIKNHSATLTPMLAQSYSISADGKEILLNLRHGVKFHQTPWFTPTRDFNAEDVVFSINRVLGGHNTYLPTLAETNVTYSNPQYRVFHEQARKVRFPYFDSIKLNEKIKSVTALSPYQVKIELFAPDSSILSHLASQYAIIFSQEYAYQLSADDNLAQLDTHPVGTGPYQVKDYVYNQYVRLVRNENYWKKEAKIEHIIVDLSTDRSGRLVKFFNNECQIASYPEVSQIGLLKNDDKHYYMQSTDGMNLAYLAFNFDKPLMRDHEIRAAISQSLNRARIIHSIYHNTATVANNIIPEVSWASSVNTPEFEFDYNPKIAKNKLADKNLLLNLWVINEEQVYNPAPFKIAEMIKWDLAQAGVKVKVRAVTRPFLTAQLRNQSENYDLILSGWLAGNLDPDGFMRPILSCGTKNELTNLSNWCNEEFDQFMDRAITTSHLSSRAKAYNEAQELVLRELPIIPIANVKRILVANSRVKGVKMTPFGSLDFSTLYFIQEKY</sequence>
<comment type="function">
    <text evidence="1">Involved in a peptide intake transport system that plays a role in the resistance to antimicrobial peptides.</text>
</comment>
<comment type="subcellular location">
    <subcellularLocation>
        <location evidence="3">Periplasm</location>
    </subcellularLocation>
</comment>
<comment type="similarity">
    <text evidence="3">Belongs to the bacterial solute-binding protein 5 family.</text>
</comment>
<organism>
    <name type="scientific">Haemophilus influenzae (strain ATCC 51907 / DSM 11121 / KW20 / Rd)</name>
    <dbReference type="NCBI Taxonomy" id="71421"/>
    <lineage>
        <taxon>Bacteria</taxon>
        <taxon>Pseudomonadati</taxon>
        <taxon>Pseudomonadota</taxon>
        <taxon>Gammaproteobacteria</taxon>
        <taxon>Pasteurellales</taxon>
        <taxon>Pasteurellaceae</taxon>
        <taxon>Haemophilus</taxon>
    </lineage>
</organism>
<protein>
    <recommendedName>
        <fullName>Peptide transport periplasmic protein SapA</fullName>
    </recommendedName>
</protein>
<evidence type="ECO:0000250" key="1"/>
<evidence type="ECO:0000255" key="2"/>
<evidence type="ECO:0000305" key="3"/>